<organism>
    <name type="scientific">Cryptococcus neoformans var. neoformans serotype D (strain JEC21 / ATCC MYA-565)</name>
    <name type="common">Filobasidiella neoformans</name>
    <dbReference type="NCBI Taxonomy" id="214684"/>
    <lineage>
        <taxon>Eukaryota</taxon>
        <taxon>Fungi</taxon>
        <taxon>Dikarya</taxon>
        <taxon>Basidiomycota</taxon>
        <taxon>Agaricomycotina</taxon>
        <taxon>Tremellomycetes</taxon>
        <taxon>Tremellales</taxon>
        <taxon>Cryptococcaceae</taxon>
        <taxon>Cryptococcus</taxon>
        <taxon>Cryptococcus neoformans species complex</taxon>
    </lineage>
</organism>
<dbReference type="EMBL" id="AF542530">
    <property type="protein sequence ID" value="AAN75617.1"/>
    <property type="molecule type" value="Genomic_DNA"/>
</dbReference>
<dbReference type="EMBL" id="AF542531">
    <property type="protein sequence ID" value="AAN75725.1"/>
    <property type="molecule type" value="Genomic_DNA"/>
</dbReference>
<dbReference type="EMBL" id="AE017344">
    <property type="protein sequence ID" value="AAW43187.1"/>
    <property type="molecule type" value="Genomic_DNA"/>
</dbReference>
<dbReference type="RefSeq" id="XP_570494.1">
    <property type="nucleotide sequence ID" value="XM_570494.1"/>
</dbReference>
<dbReference type="SMR" id="P0CN60"/>
<dbReference type="FunCoup" id="P0CN60">
    <property type="interactions" value="252"/>
</dbReference>
<dbReference type="STRING" id="214684.P0CN60"/>
<dbReference type="PaxDb" id="214684-P0CN60"/>
<dbReference type="EnsemblFungi" id="AAW43187">
    <property type="protein sequence ID" value="AAW43187"/>
    <property type="gene ID" value="CND05770"/>
</dbReference>
<dbReference type="GeneID" id="3257147"/>
<dbReference type="KEGG" id="cne:CND05770"/>
<dbReference type="VEuPathDB" id="FungiDB:CND05770"/>
<dbReference type="eggNOG" id="KOG3954">
    <property type="taxonomic scope" value="Eukaryota"/>
</dbReference>
<dbReference type="HOGENOM" id="CLU_034178_0_1_1"/>
<dbReference type="InParanoid" id="P0CN60"/>
<dbReference type="OMA" id="WRPYAEQ"/>
<dbReference type="OrthoDB" id="1715808at2759"/>
<dbReference type="Proteomes" id="UP000002149">
    <property type="component" value="Chromosome 4"/>
</dbReference>
<dbReference type="GO" id="GO:0005759">
    <property type="term" value="C:mitochondrial matrix"/>
    <property type="evidence" value="ECO:0007669"/>
    <property type="project" value="UniProtKB-SubCell"/>
</dbReference>
<dbReference type="GO" id="GO:0005739">
    <property type="term" value="C:mitochondrion"/>
    <property type="evidence" value="ECO:0000318"/>
    <property type="project" value="GO_Central"/>
</dbReference>
<dbReference type="GO" id="GO:0009055">
    <property type="term" value="F:electron transfer activity"/>
    <property type="evidence" value="ECO:0000318"/>
    <property type="project" value="GO_Central"/>
</dbReference>
<dbReference type="GO" id="GO:0050660">
    <property type="term" value="F:flavin adenine dinucleotide binding"/>
    <property type="evidence" value="ECO:0000318"/>
    <property type="project" value="GO_Central"/>
</dbReference>
<dbReference type="GO" id="GO:0033539">
    <property type="term" value="P:fatty acid beta-oxidation using acyl-CoA dehydrogenase"/>
    <property type="evidence" value="ECO:0000318"/>
    <property type="project" value="GO_Central"/>
</dbReference>
<dbReference type="CDD" id="cd01715">
    <property type="entry name" value="ETF_alpha"/>
    <property type="match status" value="1"/>
</dbReference>
<dbReference type="FunFam" id="3.40.50.1220:FF:000001">
    <property type="entry name" value="Electron transfer flavoprotein, alpha subunit"/>
    <property type="match status" value="1"/>
</dbReference>
<dbReference type="Gene3D" id="3.40.50.620">
    <property type="entry name" value="HUPs"/>
    <property type="match status" value="1"/>
</dbReference>
<dbReference type="Gene3D" id="3.40.50.1220">
    <property type="entry name" value="TPP-binding domain"/>
    <property type="match status" value="1"/>
</dbReference>
<dbReference type="InterPro" id="IPR029035">
    <property type="entry name" value="DHS-like_NAD/FAD-binding_dom"/>
</dbReference>
<dbReference type="InterPro" id="IPR014730">
    <property type="entry name" value="ETF_a/b_N"/>
</dbReference>
<dbReference type="InterPro" id="IPR001308">
    <property type="entry name" value="ETF_a/FixB"/>
</dbReference>
<dbReference type="InterPro" id="IPR033947">
    <property type="entry name" value="ETF_alpha_N"/>
</dbReference>
<dbReference type="InterPro" id="IPR014731">
    <property type="entry name" value="ETF_asu_C"/>
</dbReference>
<dbReference type="InterPro" id="IPR018206">
    <property type="entry name" value="ETF_asu_C_CS"/>
</dbReference>
<dbReference type="InterPro" id="IPR014729">
    <property type="entry name" value="Rossmann-like_a/b/a_fold"/>
</dbReference>
<dbReference type="PANTHER" id="PTHR43153">
    <property type="entry name" value="ELECTRON TRANSFER FLAVOPROTEIN ALPHA"/>
    <property type="match status" value="1"/>
</dbReference>
<dbReference type="PANTHER" id="PTHR43153:SF1">
    <property type="entry name" value="ELECTRON TRANSFER FLAVOPROTEIN SUBUNIT ALPHA, MITOCHONDRIAL"/>
    <property type="match status" value="1"/>
</dbReference>
<dbReference type="Pfam" id="PF01012">
    <property type="entry name" value="ETF"/>
    <property type="match status" value="1"/>
</dbReference>
<dbReference type="Pfam" id="PF00766">
    <property type="entry name" value="ETF_alpha"/>
    <property type="match status" value="1"/>
</dbReference>
<dbReference type="PIRSF" id="PIRSF000089">
    <property type="entry name" value="Electra_flavoP_a"/>
    <property type="match status" value="1"/>
</dbReference>
<dbReference type="SMART" id="SM00893">
    <property type="entry name" value="ETF"/>
    <property type="match status" value="1"/>
</dbReference>
<dbReference type="SUPFAM" id="SSF52402">
    <property type="entry name" value="Adenine nucleotide alpha hydrolases-like"/>
    <property type="match status" value="1"/>
</dbReference>
<dbReference type="SUPFAM" id="SSF52467">
    <property type="entry name" value="DHS-like NAD/FAD-binding domain"/>
    <property type="match status" value="1"/>
</dbReference>
<dbReference type="PROSITE" id="PS00696">
    <property type="entry name" value="ETF_ALPHA"/>
    <property type="match status" value="1"/>
</dbReference>
<name>ETFA_CRYNJ</name>
<gene>
    <name type="primary">ETF1</name>
    <name type="ordered locus">CND05770</name>
</gene>
<accession>P0CN60</accession>
<accession>Q55UP6</accession>
<accession>Q5KHP5</accession>
<accession>Q8J0W1</accession>
<accession>Q8J0X2</accession>
<reference key="1">
    <citation type="journal article" date="2004" name="PLoS Biol.">
        <title>Convergent evolution of chromosomal sex-determining regions in the animal and fungal kingdoms.</title>
        <authorList>
            <person name="Fraser J.A."/>
            <person name="Diezmann S."/>
            <person name="Subaran R.L."/>
            <person name="Allen A."/>
            <person name="Lengeler K.B."/>
            <person name="Dietrich F.S."/>
            <person name="Heitman J."/>
        </authorList>
    </citation>
    <scope>NUCLEOTIDE SEQUENCE [GENOMIC DNA]</scope>
    <source>
        <strain>JEC20</strain>
        <strain>JEC21 / ATCC MYA-565</strain>
    </source>
</reference>
<reference key="2">
    <citation type="journal article" date="2005" name="Science">
        <title>The genome of the basidiomycetous yeast and human pathogen Cryptococcus neoformans.</title>
        <authorList>
            <person name="Loftus B.J."/>
            <person name="Fung E."/>
            <person name="Roncaglia P."/>
            <person name="Rowley D."/>
            <person name="Amedeo P."/>
            <person name="Bruno D."/>
            <person name="Vamathevan J."/>
            <person name="Miranda M."/>
            <person name="Anderson I.J."/>
            <person name="Fraser J.A."/>
            <person name="Allen J.E."/>
            <person name="Bosdet I.E."/>
            <person name="Brent M.R."/>
            <person name="Chiu R."/>
            <person name="Doering T.L."/>
            <person name="Donlin M.J."/>
            <person name="D'Souza C.A."/>
            <person name="Fox D.S."/>
            <person name="Grinberg V."/>
            <person name="Fu J."/>
            <person name="Fukushima M."/>
            <person name="Haas B.J."/>
            <person name="Huang J.C."/>
            <person name="Janbon G."/>
            <person name="Jones S.J.M."/>
            <person name="Koo H.L."/>
            <person name="Krzywinski M.I."/>
            <person name="Kwon-Chung K.J."/>
            <person name="Lengeler K.B."/>
            <person name="Maiti R."/>
            <person name="Marra M.A."/>
            <person name="Marra R.E."/>
            <person name="Mathewson C.A."/>
            <person name="Mitchell T.G."/>
            <person name="Pertea M."/>
            <person name="Riggs F.R."/>
            <person name="Salzberg S.L."/>
            <person name="Schein J.E."/>
            <person name="Shvartsbeyn A."/>
            <person name="Shin H."/>
            <person name="Shumway M."/>
            <person name="Specht C.A."/>
            <person name="Suh B.B."/>
            <person name="Tenney A."/>
            <person name="Utterback T.R."/>
            <person name="Wickes B.L."/>
            <person name="Wortman J.R."/>
            <person name="Wye N.H."/>
            <person name="Kronstad J.W."/>
            <person name="Lodge J.K."/>
            <person name="Heitman J."/>
            <person name="Davis R.W."/>
            <person name="Fraser C.M."/>
            <person name="Hyman R.W."/>
        </authorList>
    </citation>
    <scope>NUCLEOTIDE SEQUENCE [LARGE SCALE GENOMIC DNA]</scope>
    <source>
        <strain>JEC21 / ATCC MYA-565</strain>
    </source>
</reference>
<comment type="function">
    <text evidence="1">The electron transfer flavoprotein serves as a specific electron acceptor for several dehydrogenases, including five acyl-CoA dehydrogenases, glutaryl-CoA and sarcosine dehydrogenase. It transfers the electrons to the main mitochondrial respiratory chain via ETF-ubiquinone oxidoreductase (ETF dehydrogenase) (By similarity).</text>
</comment>
<comment type="cofactor">
    <cofactor evidence="1">
        <name>FAD</name>
        <dbReference type="ChEBI" id="CHEBI:57692"/>
    </cofactor>
    <text evidence="1">Binds 1 FAD per dimer.</text>
</comment>
<comment type="subunit">
    <text evidence="1">Heterodimer of an alpha and a beta subunit.</text>
</comment>
<comment type="subcellular location">
    <subcellularLocation>
        <location evidence="1">Mitochondrion matrix</location>
    </subcellularLocation>
</comment>
<comment type="similarity">
    <text evidence="3">Belongs to the ETF alpha-subunit/FixB family.</text>
</comment>
<keyword id="KW-0249">Electron transport</keyword>
<keyword id="KW-0274">FAD</keyword>
<keyword id="KW-0285">Flavoprotein</keyword>
<keyword id="KW-0496">Mitochondrion</keyword>
<keyword id="KW-1185">Reference proteome</keyword>
<keyword id="KW-0809">Transit peptide</keyword>
<keyword id="KW-0813">Transport</keyword>
<protein>
    <recommendedName>
        <fullName>Probable electron transfer flavoprotein subunit alpha, mitochondrial</fullName>
        <shortName>Alpha-ETF</shortName>
    </recommendedName>
</protein>
<evidence type="ECO:0000250" key="1"/>
<evidence type="ECO:0000255" key="2"/>
<evidence type="ECO:0000305" key="3"/>
<proteinExistence type="inferred from homology"/>
<sequence length="346" mass="36189">MLYRSALRASRSFTPRLASTNSRLVSSLVFLEHKAGKLNEASLSAVTAAKTLGNDTHGLLVGTKSEIENVLDRTKEIKDLSKIYLATSDTYSHSLAEPLASLLASIASAKDVSHIFAAHTAVGKNIFPRLAGLLDTSLIADIIALESSGDTFTRPIYAGNAVLTIKSSPKDSVKVVTVRSTAFDKAAVANGSAAVEDVDIITVDTPTQFVSEELTVSSRPDLASAARVVSGGRALKSKESFDTILDPLADSLGAAVGASRAAVDAGYADNSLQVGQTGKVVAPELYVAIGISGAIQHLAGMKESKMIIAINKDPDAPIFQVADVGLVADLFESVPQLVKEIDNVKV</sequence>
<feature type="transit peptide" description="Mitochondrion" evidence="2">
    <location>
        <begin position="1"/>
        <end status="unknown"/>
    </location>
</feature>
<feature type="chain" id="PRO_0000008657" description="Probable electron transfer flavoprotein subunit alpha, mitochondrial">
    <location>
        <begin status="unknown"/>
        <end position="346"/>
    </location>
</feature>
<feature type="binding site" evidence="2">
    <location>
        <begin position="285"/>
        <end position="313"/>
    </location>
    <ligand>
        <name>FAD</name>
        <dbReference type="ChEBI" id="CHEBI:57692"/>
    </ligand>
</feature>
<feature type="sequence variant" description="In strain: JEC20.">
    <original>L</original>
    <variation>I</variation>
    <location>
        <position position="102"/>
    </location>
</feature>
<feature type="sequence variant" description="In strain: JEC20.">
    <original>A</original>
    <variation>V</variation>
    <location>
        <position position="107"/>
    </location>
</feature>